<keyword id="KW-0158">Chromosome</keyword>
<keyword id="KW-0238">DNA-binding</keyword>
<keyword id="KW-0479">Metal-binding</keyword>
<keyword id="KW-0539">Nucleus</keyword>
<keyword id="KW-1185">Reference proteome</keyword>
<keyword id="KW-0677">Repeat</keyword>
<keyword id="KW-0779">Telomere</keyword>
<keyword id="KW-0804">Transcription</keyword>
<keyword id="KW-0805">Transcription regulation</keyword>
<keyword id="KW-0862">Zinc</keyword>
<keyword id="KW-0863">Zinc-finger</keyword>
<gene>
    <name type="primary">Zscan4d</name>
</gene>
<sequence length="506" mass="58000">MASQQAPAKDLQTNNLEFTPSHSSGVQWVEDISNSPSAQLNFSPSNNGCWATQELQSLWKMFNSWLQPEKQTKEQMISQLVLEQFLLIGHCKDKYALTEKWKASGSDMRRFMESLTDECLKPPVMVHVSMQGQEALFSENMPLKEVIKLLKQQQSATRPTPDNEQMPVDTTQDRLLATGQENSENECNNSCNATEANVGESCSGNEMDSLLIIQKEQYPEHEEGNVVFQFPLDARRASQGNSSHHVDFRSAPTPADVPMEEQPKDLSRENISEDKNNCYNTSRNAATQVYRSDNIPRKKTDSLSINKRIYHSEPEEGDIPYGVPQDSTRASQGTSTCLQESLGECFSEKDPRELPGLESRQEEPISDPVFLGKDHEANLPCESHQKRFRRDAKLFKCEECSRMFKHARSLSSHQRTHLNKKSELLCVTCQKMFKRVSDRRTHEIIHMPEKPFKCSTCEKSFSHKTNLKSHEMIHTGEMPYVCSLCSRRFRQSSTYHRHLRNYHRSD</sequence>
<comment type="function">
    <text evidence="1">Transcription factor required to regulate early development. Binds telomeres and plays a key role in genomic stability by regulating telomere elongation. Acts as an activator of spontaneous telomere sister chromatid exchange (T-SCE) and telomere elongation (By similarity).</text>
</comment>
<comment type="subcellular location">
    <subcellularLocation>
        <location evidence="3">Nucleus</location>
    </subcellularLocation>
    <subcellularLocation>
        <location evidence="1">Chromosome</location>
        <location evidence="1">Telomere</location>
    </subcellularLocation>
</comment>
<comment type="tissue specificity">
    <text evidence="5">Highly expressed at the 2-cell stage but its expression is rapidly turned off.</text>
</comment>
<evidence type="ECO:0000250" key="1"/>
<evidence type="ECO:0000255" key="2">
    <source>
        <dbReference type="PROSITE-ProRule" id="PRU00042"/>
    </source>
</evidence>
<evidence type="ECO:0000255" key="3">
    <source>
        <dbReference type="PROSITE-ProRule" id="PRU00187"/>
    </source>
</evidence>
<evidence type="ECO:0000256" key="4">
    <source>
        <dbReference type="SAM" id="MobiDB-lite"/>
    </source>
</evidence>
<evidence type="ECO:0000269" key="5">
    <source>
    </source>
</evidence>
<dbReference type="EMBL" id="EF143406">
    <property type="protein sequence ID" value="ABO42266.1"/>
    <property type="molecule type" value="mRNA"/>
</dbReference>
<dbReference type="EMBL" id="AC151974">
    <property type="status" value="NOT_ANNOTATED_CDS"/>
    <property type="molecule type" value="Genomic_DNA"/>
</dbReference>
<dbReference type="CCDS" id="CCDS52013.1"/>
<dbReference type="RefSeq" id="NP_001093656.1">
    <property type="nucleotide sequence ID" value="NM_001100186.1"/>
</dbReference>
<dbReference type="RefSeq" id="XP_006540271.1">
    <property type="nucleotide sequence ID" value="XM_006540208.2"/>
</dbReference>
<dbReference type="SMR" id="A7KBS4"/>
<dbReference type="BioGRID" id="244767">
    <property type="interactions" value="1"/>
</dbReference>
<dbReference type="FunCoup" id="A7KBS4">
    <property type="interactions" value="2"/>
</dbReference>
<dbReference type="STRING" id="10090.ENSMUSP00000066504"/>
<dbReference type="GlyGen" id="A7KBS4">
    <property type="glycosylation" value="2 sites"/>
</dbReference>
<dbReference type="iPTMnet" id="A7KBS4"/>
<dbReference type="PhosphoSitePlus" id="A7KBS4"/>
<dbReference type="PaxDb" id="10090-ENSMUSP00000066504"/>
<dbReference type="PeptideAtlas" id="A7KBS4"/>
<dbReference type="Ensembl" id="ENSMUST00000067210.12">
    <property type="protein sequence ID" value="ENSMUSP00000066504.5"/>
    <property type="gene ID" value="ENSMUSG00000090714.11"/>
</dbReference>
<dbReference type="GeneID" id="545913"/>
<dbReference type="KEGG" id="mmu:545913"/>
<dbReference type="UCSC" id="uc009fdm.1">
    <property type="organism name" value="mouse"/>
</dbReference>
<dbReference type="AGR" id="MGI:3645954"/>
<dbReference type="CTD" id="545913"/>
<dbReference type="MGI" id="MGI:3645954">
    <property type="gene designation" value="Zscan4d"/>
</dbReference>
<dbReference type="VEuPathDB" id="HostDB:ENSMUSG00000090714"/>
<dbReference type="eggNOG" id="KOG1721">
    <property type="taxonomic scope" value="Eukaryota"/>
</dbReference>
<dbReference type="GeneTree" id="ENSGT00390000012244"/>
<dbReference type="HOGENOM" id="CLU_002678_49_10_1"/>
<dbReference type="InParanoid" id="A7KBS4"/>
<dbReference type="OMA" id="YPEHEEG"/>
<dbReference type="OrthoDB" id="8922241at2759"/>
<dbReference type="PhylomeDB" id="A7KBS4"/>
<dbReference type="TreeFam" id="TF337216"/>
<dbReference type="BioGRID-ORCS" id="545913">
    <property type="hits" value="4 hits in 55 CRISPR screens"/>
</dbReference>
<dbReference type="ChiTaRS" id="Zscan4c">
    <property type="organism name" value="mouse"/>
</dbReference>
<dbReference type="PRO" id="PR:A7KBS4"/>
<dbReference type="Proteomes" id="UP000000589">
    <property type="component" value="Chromosome 7"/>
</dbReference>
<dbReference type="RNAct" id="A7KBS4">
    <property type="molecule type" value="protein"/>
</dbReference>
<dbReference type="Bgee" id="ENSMUSG00000090714">
    <property type="expression patterns" value="Expressed in animal zygote and 3 other cell types or tissues"/>
</dbReference>
<dbReference type="GO" id="GO:0000781">
    <property type="term" value="C:chromosome, telomeric region"/>
    <property type="evidence" value="ECO:0000250"/>
    <property type="project" value="UniProtKB"/>
</dbReference>
<dbReference type="GO" id="GO:0005654">
    <property type="term" value="C:nucleoplasm"/>
    <property type="evidence" value="ECO:0000304"/>
    <property type="project" value="Reactome"/>
</dbReference>
<dbReference type="GO" id="GO:0003677">
    <property type="term" value="F:DNA binding"/>
    <property type="evidence" value="ECO:0007669"/>
    <property type="project" value="UniProtKB-KW"/>
</dbReference>
<dbReference type="GO" id="GO:0008270">
    <property type="term" value="F:zinc ion binding"/>
    <property type="evidence" value="ECO:0007669"/>
    <property type="project" value="UniProtKB-KW"/>
</dbReference>
<dbReference type="GO" id="GO:0010833">
    <property type="term" value="P:telomere maintenance via telomere lengthening"/>
    <property type="evidence" value="ECO:0000250"/>
    <property type="project" value="UniProtKB"/>
</dbReference>
<dbReference type="FunFam" id="3.30.160.60:FF:004431">
    <property type="match status" value="1"/>
</dbReference>
<dbReference type="FunFam" id="3.30.160.60:FF:001485">
    <property type="entry name" value="Krueppel-related zinc finger protein"/>
    <property type="match status" value="1"/>
</dbReference>
<dbReference type="FunFam" id="1.10.4020.10:FF:000004">
    <property type="entry name" value="Zinc finger and SCAN domain containing 4"/>
    <property type="match status" value="1"/>
</dbReference>
<dbReference type="FunFam" id="3.30.160.60:FF:001779">
    <property type="entry name" value="Zinc finger and SCAN domain containing 4"/>
    <property type="match status" value="1"/>
</dbReference>
<dbReference type="FunFam" id="3.30.160.60:FF:003083">
    <property type="entry name" value="Zinc finger and SCAN domain containing protein 4F"/>
    <property type="match status" value="1"/>
</dbReference>
<dbReference type="Gene3D" id="3.30.160.60">
    <property type="entry name" value="Classic Zinc Finger"/>
    <property type="match status" value="4"/>
</dbReference>
<dbReference type="Gene3D" id="1.10.4020.10">
    <property type="entry name" value="DNA breaking-rejoining enzymes"/>
    <property type="match status" value="1"/>
</dbReference>
<dbReference type="InterPro" id="IPR003309">
    <property type="entry name" value="SCAN_dom"/>
</dbReference>
<dbReference type="InterPro" id="IPR038269">
    <property type="entry name" value="SCAN_sf"/>
</dbReference>
<dbReference type="InterPro" id="IPR036236">
    <property type="entry name" value="Znf_C2H2_sf"/>
</dbReference>
<dbReference type="InterPro" id="IPR013087">
    <property type="entry name" value="Znf_C2H2_type"/>
</dbReference>
<dbReference type="PANTHER" id="PTHR23226">
    <property type="entry name" value="ZINC FINGER AND SCAN DOMAIN-CONTAINING"/>
    <property type="match status" value="1"/>
</dbReference>
<dbReference type="PANTHER" id="PTHR23226:SF88">
    <property type="entry name" value="ZINC FINGER AND SCAN DOMAIN-CONTAINING PROTEIN 4"/>
    <property type="match status" value="1"/>
</dbReference>
<dbReference type="Pfam" id="PF02023">
    <property type="entry name" value="SCAN"/>
    <property type="match status" value="1"/>
</dbReference>
<dbReference type="Pfam" id="PF00096">
    <property type="entry name" value="zf-C2H2"/>
    <property type="match status" value="3"/>
</dbReference>
<dbReference type="SMART" id="SM00431">
    <property type="entry name" value="SCAN"/>
    <property type="match status" value="1"/>
</dbReference>
<dbReference type="SMART" id="SM00355">
    <property type="entry name" value="ZnF_C2H2"/>
    <property type="match status" value="4"/>
</dbReference>
<dbReference type="SUPFAM" id="SSF57667">
    <property type="entry name" value="beta-beta-alpha zinc fingers"/>
    <property type="match status" value="2"/>
</dbReference>
<dbReference type="SUPFAM" id="SSF47353">
    <property type="entry name" value="Retrovirus capsid dimerization domain-like"/>
    <property type="match status" value="1"/>
</dbReference>
<dbReference type="PROSITE" id="PS50804">
    <property type="entry name" value="SCAN_BOX"/>
    <property type="match status" value="1"/>
</dbReference>
<dbReference type="PROSITE" id="PS00028">
    <property type="entry name" value="ZINC_FINGER_C2H2_1"/>
    <property type="match status" value="4"/>
</dbReference>
<dbReference type="PROSITE" id="PS50157">
    <property type="entry name" value="ZINC_FINGER_C2H2_2"/>
    <property type="match status" value="4"/>
</dbReference>
<name>ZSC4D_MOUSE</name>
<accession>A7KBS4</accession>
<protein>
    <recommendedName>
        <fullName>Zinc finger and SCAN domain containing protein 4D</fullName>
    </recommendedName>
</protein>
<reference key="1">
    <citation type="journal article" date="2007" name="Dev. Biol.">
        <title>Zscan4: a novel gene expressed exclusively in late 2-cell embryos and embryonic stem cells.</title>
        <authorList>
            <person name="Falco G."/>
            <person name="Lee S.L."/>
            <person name="Stanghellini I."/>
            <person name="Bassey U.C."/>
            <person name="Hamatani T."/>
            <person name="Ko M.S."/>
        </authorList>
    </citation>
    <scope>NUCLEOTIDE SEQUENCE [MRNA]</scope>
    <scope>TISSUE SPECIFICITY</scope>
    <source>
        <strain>C57BL/6 X DBA/2</strain>
    </source>
</reference>
<reference key="2">
    <citation type="journal article" date="2009" name="PLoS Biol.">
        <title>Lineage-specific biology revealed by a finished genome assembly of the mouse.</title>
        <authorList>
            <person name="Church D.M."/>
            <person name="Goodstadt L."/>
            <person name="Hillier L.W."/>
            <person name="Zody M.C."/>
            <person name="Goldstein S."/>
            <person name="She X."/>
            <person name="Bult C.J."/>
            <person name="Agarwala R."/>
            <person name="Cherry J.L."/>
            <person name="DiCuccio M."/>
            <person name="Hlavina W."/>
            <person name="Kapustin Y."/>
            <person name="Meric P."/>
            <person name="Maglott D."/>
            <person name="Birtle Z."/>
            <person name="Marques A.C."/>
            <person name="Graves T."/>
            <person name="Zhou S."/>
            <person name="Teague B."/>
            <person name="Potamousis K."/>
            <person name="Churas C."/>
            <person name="Place M."/>
            <person name="Herschleb J."/>
            <person name="Runnheim R."/>
            <person name="Forrest D."/>
            <person name="Amos-Landgraf J."/>
            <person name="Schwartz D.C."/>
            <person name="Cheng Z."/>
            <person name="Lindblad-Toh K."/>
            <person name="Eichler E.E."/>
            <person name="Ponting C.P."/>
        </authorList>
    </citation>
    <scope>NUCLEOTIDE SEQUENCE [LARGE SCALE GENOMIC DNA]</scope>
    <source>
        <strain>C57BL/6J</strain>
    </source>
</reference>
<feature type="chain" id="PRO_0000394245" description="Zinc finger and SCAN domain containing protein 4D">
    <location>
        <begin position="1"/>
        <end position="506"/>
    </location>
</feature>
<feature type="domain" description="SCAN box" evidence="3">
    <location>
        <begin position="37"/>
        <end position="119"/>
    </location>
</feature>
<feature type="zinc finger region" description="C2H2-type 1" evidence="2">
    <location>
        <begin position="395"/>
        <end position="417"/>
    </location>
</feature>
<feature type="zinc finger region" description="C2H2-type 2" evidence="2">
    <location>
        <begin position="424"/>
        <end position="446"/>
    </location>
</feature>
<feature type="zinc finger region" description="C2H2-type 3" evidence="2">
    <location>
        <begin position="452"/>
        <end position="474"/>
    </location>
</feature>
<feature type="zinc finger region" description="C2H2-type 4" evidence="2">
    <location>
        <begin position="480"/>
        <end position="503"/>
    </location>
</feature>
<feature type="region of interest" description="Disordered" evidence="4">
    <location>
        <begin position="238"/>
        <end position="264"/>
    </location>
</feature>
<organism>
    <name type="scientific">Mus musculus</name>
    <name type="common">Mouse</name>
    <dbReference type="NCBI Taxonomy" id="10090"/>
    <lineage>
        <taxon>Eukaryota</taxon>
        <taxon>Metazoa</taxon>
        <taxon>Chordata</taxon>
        <taxon>Craniata</taxon>
        <taxon>Vertebrata</taxon>
        <taxon>Euteleostomi</taxon>
        <taxon>Mammalia</taxon>
        <taxon>Eutheria</taxon>
        <taxon>Euarchontoglires</taxon>
        <taxon>Glires</taxon>
        <taxon>Rodentia</taxon>
        <taxon>Myomorpha</taxon>
        <taxon>Muroidea</taxon>
        <taxon>Muridae</taxon>
        <taxon>Murinae</taxon>
        <taxon>Mus</taxon>
        <taxon>Mus</taxon>
    </lineage>
</organism>
<proteinExistence type="evidence at transcript level"/>